<evidence type="ECO:0000250" key="1"/>
<evidence type="ECO:0000255" key="2">
    <source>
        <dbReference type="PROSITE-ProRule" id="PRU00227"/>
    </source>
</evidence>
<evidence type="ECO:0000256" key="3">
    <source>
        <dbReference type="SAM" id="MobiDB-lite"/>
    </source>
</evidence>
<evidence type="ECO:0000305" key="4"/>
<accession>Q4WZV6</accession>
<protein>
    <recommendedName>
        <fullName>Xylanolytic transcriptional activator xlnR</fullName>
    </recommendedName>
    <alternativeName>
        <fullName>Xylanase regulator</fullName>
    </alternativeName>
</protein>
<organism>
    <name type="scientific">Aspergillus fumigatus (strain ATCC MYA-4609 / CBS 101355 / FGSC A1100 / Af293)</name>
    <name type="common">Neosartorya fumigata</name>
    <dbReference type="NCBI Taxonomy" id="330879"/>
    <lineage>
        <taxon>Eukaryota</taxon>
        <taxon>Fungi</taxon>
        <taxon>Dikarya</taxon>
        <taxon>Ascomycota</taxon>
        <taxon>Pezizomycotina</taxon>
        <taxon>Eurotiomycetes</taxon>
        <taxon>Eurotiomycetidae</taxon>
        <taxon>Eurotiales</taxon>
        <taxon>Aspergillaceae</taxon>
        <taxon>Aspergillus</taxon>
        <taxon>Aspergillus subgen. Fumigati</taxon>
    </lineage>
</organism>
<dbReference type="EMBL" id="AAHF01000001">
    <property type="protein sequence ID" value="EAL93859.1"/>
    <property type="molecule type" value="Genomic_DNA"/>
</dbReference>
<dbReference type="RefSeq" id="XP_755897.1">
    <property type="nucleotide sequence ID" value="XM_750804.1"/>
</dbReference>
<dbReference type="STRING" id="330879.Q4WZV6"/>
<dbReference type="EnsemblFungi" id="EAL93859">
    <property type="protein sequence ID" value="EAL93859"/>
    <property type="gene ID" value="AFUA_2G15620"/>
</dbReference>
<dbReference type="GeneID" id="3512841"/>
<dbReference type="KEGG" id="afm:AFUA_2G15620"/>
<dbReference type="VEuPathDB" id="FungiDB:Afu2g15620"/>
<dbReference type="eggNOG" id="ENOG502QUI0">
    <property type="taxonomic scope" value="Eukaryota"/>
</dbReference>
<dbReference type="HOGENOM" id="CLU_006123_1_0_1"/>
<dbReference type="InParanoid" id="Q4WZV6"/>
<dbReference type="OMA" id="NFPSFSM"/>
<dbReference type="OrthoDB" id="5365785at2759"/>
<dbReference type="Proteomes" id="UP000002530">
    <property type="component" value="Chromosome 2"/>
</dbReference>
<dbReference type="GO" id="GO:0005634">
    <property type="term" value="C:nucleus"/>
    <property type="evidence" value="ECO:0007669"/>
    <property type="project" value="UniProtKB-SubCell"/>
</dbReference>
<dbReference type="GO" id="GO:0003677">
    <property type="term" value="F:DNA binding"/>
    <property type="evidence" value="ECO:0007669"/>
    <property type="project" value="UniProtKB-KW"/>
</dbReference>
<dbReference type="GO" id="GO:0000981">
    <property type="term" value="F:DNA-binding transcription factor activity, RNA polymerase II-specific"/>
    <property type="evidence" value="ECO:0007669"/>
    <property type="project" value="InterPro"/>
</dbReference>
<dbReference type="GO" id="GO:0008270">
    <property type="term" value="F:zinc ion binding"/>
    <property type="evidence" value="ECO:0007669"/>
    <property type="project" value="InterPro"/>
</dbReference>
<dbReference type="GO" id="GO:0006351">
    <property type="term" value="P:DNA-templated transcription"/>
    <property type="evidence" value="ECO:0007669"/>
    <property type="project" value="InterPro"/>
</dbReference>
<dbReference type="GO" id="GO:0045893">
    <property type="term" value="P:positive regulation of DNA-templated transcription"/>
    <property type="evidence" value="ECO:0000250"/>
    <property type="project" value="UniProtKB"/>
</dbReference>
<dbReference type="GO" id="GO:0045493">
    <property type="term" value="P:xylan catabolic process"/>
    <property type="evidence" value="ECO:0000250"/>
    <property type="project" value="UniProtKB"/>
</dbReference>
<dbReference type="CDD" id="cd12148">
    <property type="entry name" value="fungal_TF_MHR"/>
    <property type="match status" value="1"/>
</dbReference>
<dbReference type="CDD" id="cd00067">
    <property type="entry name" value="GAL4"/>
    <property type="match status" value="1"/>
</dbReference>
<dbReference type="FunFam" id="4.10.240.10:FF:000004">
    <property type="entry name" value="Xylanolytic transcriptional activator XlnR"/>
    <property type="match status" value="1"/>
</dbReference>
<dbReference type="Gene3D" id="4.10.240.10">
    <property type="entry name" value="Zn(2)-C6 fungal-type DNA-binding domain"/>
    <property type="match status" value="1"/>
</dbReference>
<dbReference type="InterPro" id="IPR007219">
    <property type="entry name" value="Transcription_factor_dom_fun"/>
</dbReference>
<dbReference type="InterPro" id="IPR051439">
    <property type="entry name" value="XlnR/Xlr1"/>
</dbReference>
<dbReference type="InterPro" id="IPR036864">
    <property type="entry name" value="Zn2-C6_fun-type_DNA-bd_sf"/>
</dbReference>
<dbReference type="InterPro" id="IPR001138">
    <property type="entry name" value="Zn2Cys6_DnaBD"/>
</dbReference>
<dbReference type="PANTHER" id="PTHR47663">
    <property type="entry name" value="XYLANOLYTIC TRANSCRIPTIONAL ACTIVATOR XLNR-RELATED"/>
    <property type="match status" value="1"/>
</dbReference>
<dbReference type="PANTHER" id="PTHR47663:SF1">
    <property type="entry name" value="XYLANOLYTIC TRANSCRIPTIONAL ACTIVATOR XLNR-RELATED"/>
    <property type="match status" value="1"/>
</dbReference>
<dbReference type="Pfam" id="PF04082">
    <property type="entry name" value="Fungal_trans"/>
    <property type="match status" value="1"/>
</dbReference>
<dbReference type="Pfam" id="PF00172">
    <property type="entry name" value="Zn_clus"/>
    <property type="match status" value="1"/>
</dbReference>
<dbReference type="SMART" id="SM00906">
    <property type="entry name" value="Fungal_trans"/>
    <property type="match status" value="1"/>
</dbReference>
<dbReference type="SMART" id="SM00066">
    <property type="entry name" value="GAL4"/>
    <property type="match status" value="1"/>
</dbReference>
<dbReference type="SUPFAM" id="SSF57701">
    <property type="entry name" value="Zn2/Cys6 DNA-binding domain"/>
    <property type="match status" value="1"/>
</dbReference>
<dbReference type="PROSITE" id="PS50048">
    <property type="entry name" value="ZN2_CY6_FUNGAL_2"/>
    <property type="match status" value="1"/>
</dbReference>
<gene>
    <name type="primary">xlnR</name>
    <name type="ORF">AFUA_2G15620</name>
</gene>
<comment type="function">
    <text evidence="1">Transcriptional activator of the xylanolytic system. Involved in the regulation of extracellular cellulolytic and xylanolytic genes and in the regulation of the intracellular activities of D-xylose catabolic genes in the pentose catabolic pathway (PCP) in response to the presence of D-xylose (By similarity).</text>
</comment>
<comment type="subcellular location">
    <subcellularLocation>
        <location evidence="2">Nucleus</location>
    </subcellularLocation>
</comment>
<comment type="similarity">
    <text evidence="4">Belongs to the xlnR/xlr1 family.</text>
</comment>
<feature type="chain" id="PRO_0000393151" description="Xylanolytic transcriptional activator xlnR">
    <location>
        <begin position="1"/>
        <end position="954"/>
    </location>
</feature>
<feature type="DNA-binding region" description="Zn(2)-C6 fungal-type" evidence="2">
    <location>
        <begin position="119"/>
        <end position="145"/>
    </location>
</feature>
<feature type="region of interest" description="Disordered" evidence="3">
    <location>
        <begin position="1"/>
        <end position="39"/>
    </location>
</feature>
<feature type="region of interest" description="Disordered" evidence="3">
    <location>
        <begin position="51"/>
        <end position="93"/>
    </location>
</feature>
<feature type="region of interest" description="Disordered" evidence="3">
    <location>
        <begin position="173"/>
        <end position="226"/>
    </location>
</feature>
<feature type="region of interest" description="Disordered" evidence="3">
    <location>
        <begin position="310"/>
        <end position="333"/>
    </location>
</feature>
<feature type="region of interest" description="Disordered" evidence="3">
    <location>
        <begin position="566"/>
        <end position="607"/>
    </location>
</feature>
<feature type="region of interest" description="Disordered" evidence="3">
    <location>
        <begin position="758"/>
        <end position="777"/>
    </location>
</feature>
<feature type="compositionally biased region" description="Low complexity" evidence="3">
    <location>
        <begin position="8"/>
        <end position="21"/>
    </location>
</feature>
<feature type="compositionally biased region" description="Polar residues" evidence="3">
    <location>
        <begin position="22"/>
        <end position="33"/>
    </location>
</feature>
<feature type="compositionally biased region" description="Basic and acidic residues" evidence="3">
    <location>
        <begin position="64"/>
        <end position="78"/>
    </location>
</feature>
<feature type="compositionally biased region" description="Polar residues" evidence="3">
    <location>
        <begin position="82"/>
        <end position="91"/>
    </location>
</feature>
<feature type="compositionally biased region" description="Polar residues" evidence="3">
    <location>
        <begin position="174"/>
        <end position="183"/>
    </location>
</feature>
<feature type="compositionally biased region" description="Basic and acidic residues" evidence="3">
    <location>
        <begin position="574"/>
        <end position="590"/>
    </location>
</feature>
<feature type="compositionally biased region" description="Polar residues" evidence="3">
    <location>
        <begin position="764"/>
        <end position="777"/>
    </location>
</feature>
<sequence length="954" mass="103923">MSTTSLQHFPHSYSPFSSSRSLNRMAQSQTSGLDTLAEGSQYALEQLQMSREAAGSGEATDSVGKPKDQFQVDNDNHHNNHSLSNFKNPSQRDPLVEARSTIRKNSASAPVRRRISRACDQCNQLRTKCDGQNPCAHCIDFGLTCEYARERKKRGKASKKDLAAAAAAAAAAATNSGQPNGSSGKEDAALVGGHTSPDRRPTINGRYDPAFEVPRNLNGSAQHSEASGMVGMQNSQHLPPHSQSSMGGGLEGLPLNGYNGLNDSGRPSMPVPELQSLHMLHNSHTNPRSPSSILPHHRYNGGYNDSAYSLMNPQEPNSTSISHFRLGSSTENPPNSFLGLSPPAQSPGWLPLPSPSPANFPSFSMASFSTTLRYPVLHPVLPHIASIIPQSLACDLLDVYFTSSSSSHLSPQSPYVVGYIFRKQSFLHPTKPRVCTPGLLASMLWVAAQTSDAPFLTSPPSARGRVCQKLLELTIGLLRPLIHGPAPGETSPNYAANMVINGVALGGFGVSMDQLGAQSSATGAVDDVATYVHLATVISASEYKAASMRWWTAAWSLARELKLGRELPPNTPHARPDAERDGDPDADLSKRHPPPLITSMGHGPGNTIINITEEEREERRRLWWLLYATDRHLALCYNRPLTLLDKECEGLLQPMNDDLWQAGDFATYRQAGPPVECTGHSMFGYFLPLMTILGEIVDLQQARNHPRFGLAFRNSAECEAQVLEIARQLDVYAQSLKEFETRYTSSLALGAAETEAAMDGSHPNHVSPSGRSSSTVESRVNESIVHTKMVVAYGTHIMHVLHILLAGKWDPINLLDDNDLWISSESFVAAMGHAVGAAEAAAEILEYDPDLSFMPFFFGIYLLQGSFLLLLTADKLQGDASPSVVRACETIVRAHEACVVTLNTEYQRTFRKVMRSALAQVRGRLPEDFGEQQQRRREVLALYRWTGDGSGLAL</sequence>
<proteinExistence type="inferred from homology"/>
<name>XLNR_ASPFU</name>
<keyword id="KW-0010">Activator</keyword>
<keyword id="KW-0238">DNA-binding</keyword>
<keyword id="KW-0479">Metal-binding</keyword>
<keyword id="KW-0539">Nucleus</keyword>
<keyword id="KW-1185">Reference proteome</keyword>
<keyword id="KW-0804">Transcription</keyword>
<keyword id="KW-0805">Transcription regulation</keyword>
<keyword id="KW-0862">Zinc</keyword>
<reference key="1">
    <citation type="journal article" date="2005" name="Nature">
        <title>Genomic sequence of the pathogenic and allergenic filamentous fungus Aspergillus fumigatus.</title>
        <authorList>
            <person name="Nierman W.C."/>
            <person name="Pain A."/>
            <person name="Anderson M.J."/>
            <person name="Wortman J.R."/>
            <person name="Kim H.S."/>
            <person name="Arroyo J."/>
            <person name="Berriman M."/>
            <person name="Abe K."/>
            <person name="Archer D.B."/>
            <person name="Bermejo C."/>
            <person name="Bennett J.W."/>
            <person name="Bowyer P."/>
            <person name="Chen D."/>
            <person name="Collins M."/>
            <person name="Coulsen R."/>
            <person name="Davies R."/>
            <person name="Dyer P.S."/>
            <person name="Farman M.L."/>
            <person name="Fedorova N."/>
            <person name="Fedorova N.D."/>
            <person name="Feldblyum T.V."/>
            <person name="Fischer R."/>
            <person name="Fosker N."/>
            <person name="Fraser A."/>
            <person name="Garcia J.L."/>
            <person name="Garcia M.J."/>
            <person name="Goble A."/>
            <person name="Goldman G.H."/>
            <person name="Gomi K."/>
            <person name="Griffith-Jones S."/>
            <person name="Gwilliam R."/>
            <person name="Haas B.J."/>
            <person name="Haas H."/>
            <person name="Harris D.E."/>
            <person name="Horiuchi H."/>
            <person name="Huang J."/>
            <person name="Humphray S."/>
            <person name="Jimenez J."/>
            <person name="Keller N."/>
            <person name="Khouri H."/>
            <person name="Kitamoto K."/>
            <person name="Kobayashi T."/>
            <person name="Konzack S."/>
            <person name="Kulkarni R."/>
            <person name="Kumagai T."/>
            <person name="Lafton A."/>
            <person name="Latge J.-P."/>
            <person name="Li W."/>
            <person name="Lord A."/>
            <person name="Lu C."/>
            <person name="Majoros W.H."/>
            <person name="May G.S."/>
            <person name="Miller B.L."/>
            <person name="Mohamoud Y."/>
            <person name="Molina M."/>
            <person name="Monod M."/>
            <person name="Mouyna I."/>
            <person name="Mulligan S."/>
            <person name="Murphy L.D."/>
            <person name="O'Neil S."/>
            <person name="Paulsen I."/>
            <person name="Penalva M.A."/>
            <person name="Pertea M."/>
            <person name="Price C."/>
            <person name="Pritchard B.L."/>
            <person name="Quail M.A."/>
            <person name="Rabbinowitsch E."/>
            <person name="Rawlins N."/>
            <person name="Rajandream M.A."/>
            <person name="Reichard U."/>
            <person name="Renauld H."/>
            <person name="Robson G.D."/>
            <person name="Rodriguez de Cordoba S."/>
            <person name="Rodriguez-Pena J.M."/>
            <person name="Ronning C.M."/>
            <person name="Rutter S."/>
            <person name="Salzberg S.L."/>
            <person name="Sanchez M."/>
            <person name="Sanchez-Ferrero J.C."/>
            <person name="Saunders D."/>
            <person name="Seeger K."/>
            <person name="Squares R."/>
            <person name="Squares S."/>
            <person name="Takeuchi M."/>
            <person name="Tekaia F."/>
            <person name="Turner G."/>
            <person name="Vazquez de Aldana C.R."/>
            <person name="Weidman J."/>
            <person name="White O."/>
            <person name="Woodward J.R."/>
            <person name="Yu J.-H."/>
            <person name="Fraser C.M."/>
            <person name="Galagan J.E."/>
            <person name="Asai K."/>
            <person name="Machida M."/>
            <person name="Hall N."/>
            <person name="Barrell B.G."/>
            <person name="Denning D.W."/>
        </authorList>
    </citation>
    <scope>NUCLEOTIDE SEQUENCE [LARGE SCALE GENOMIC DNA]</scope>
    <source>
        <strain>ATCC MYA-4609 / CBS 101355 / FGSC A1100 / Af293</strain>
    </source>
</reference>